<protein>
    <recommendedName>
        <fullName evidence="1">NADH-quinone oxidoreductase subunit C</fullName>
        <ecNumber evidence="1">7.1.1.-</ecNumber>
    </recommendedName>
    <alternativeName>
        <fullName evidence="1">NADH dehydrogenase I subunit C</fullName>
    </alternativeName>
    <alternativeName>
        <fullName evidence="1">NDH-1 subunit C</fullName>
    </alternativeName>
</protein>
<sequence>MAEQASSFTDRLAARFAGAQIAVALPRGEVTLEVAAADWHATCLALRDELGFEQLSDLCGVDYLGYGSGEWDTADVSSQGFSRGVEGKAVGRFAWGEFPSQESSAGAQPQQLPKQRFAVVAQLISYQHNQRLRVRCYAPDEQVPLVASVTDIWPGVNWFEREAFDLFGIVFDGHPDLRRILTDYGFVGHPFRKDFPLIGNVEVRYDEERKRVVYEPVTSVEPRVGVPRVIRDDARYETAAGEVGRSETAK</sequence>
<name>NUOC_XANOP</name>
<comment type="function">
    <text evidence="1">NDH-1 shuttles electrons from NADH, via FMN and iron-sulfur (Fe-S) centers, to quinones in the respiratory chain. The immediate electron acceptor for the enzyme in this species is believed to be ubiquinone. Couples the redox reaction to proton translocation (for every two electrons transferred, four hydrogen ions are translocated across the cytoplasmic membrane), and thus conserves the redox energy in a proton gradient.</text>
</comment>
<comment type="catalytic activity">
    <reaction evidence="1">
        <text>a quinone + NADH + 5 H(+)(in) = a quinol + NAD(+) + 4 H(+)(out)</text>
        <dbReference type="Rhea" id="RHEA:57888"/>
        <dbReference type="ChEBI" id="CHEBI:15378"/>
        <dbReference type="ChEBI" id="CHEBI:24646"/>
        <dbReference type="ChEBI" id="CHEBI:57540"/>
        <dbReference type="ChEBI" id="CHEBI:57945"/>
        <dbReference type="ChEBI" id="CHEBI:132124"/>
    </reaction>
</comment>
<comment type="subunit">
    <text evidence="1">NDH-1 is composed of 14 different subunits. Subunits NuoB, C, D, E, F, and G constitute the peripheral sector of the complex.</text>
</comment>
<comment type="subcellular location">
    <subcellularLocation>
        <location evidence="1">Cell inner membrane</location>
        <topology evidence="1">Peripheral membrane protein</topology>
        <orientation evidence="1">Cytoplasmic side</orientation>
    </subcellularLocation>
</comment>
<comment type="similarity">
    <text evidence="1">Belongs to the complex I 30 kDa subunit family.</text>
</comment>
<keyword id="KW-0997">Cell inner membrane</keyword>
<keyword id="KW-1003">Cell membrane</keyword>
<keyword id="KW-0472">Membrane</keyword>
<keyword id="KW-0520">NAD</keyword>
<keyword id="KW-0874">Quinone</keyword>
<keyword id="KW-1278">Translocase</keyword>
<keyword id="KW-0813">Transport</keyword>
<keyword id="KW-0830">Ubiquinone</keyword>
<feature type="chain" id="PRO_0000358230" description="NADH-quinone oxidoreductase subunit C">
    <location>
        <begin position="1"/>
        <end position="250"/>
    </location>
</feature>
<accession>B2SVL7</accession>
<gene>
    <name evidence="1" type="primary">nuoC</name>
    <name type="ordered locus">PXO_01289</name>
</gene>
<dbReference type="EC" id="7.1.1.-" evidence="1"/>
<dbReference type="EMBL" id="CP000967">
    <property type="protein sequence ID" value="ACD60091.1"/>
    <property type="molecule type" value="Genomic_DNA"/>
</dbReference>
<dbReference type="RefSeq" id="WP_011259749.1">
    <property type="nucleotide sequence ID" value="NC_010717.2"/>
</dbReference>
<dbReference type="SMR" id="B2SVL7"/>
<dbReference type="KEGG" id="xop:PXO_01289"/>
<dbReference type="eggNOG" id="COG0852">
    <property type="taxonomic scope" value="Bacteria"/>
</dbReference>
<dbReference type="HOGENOM" id="CLU_042628_2_1_6"/>
<dbReference type="Proteomes" id="UP000001740">
    <property type="component" value="Chromosome"/>
</dbReference>
<dbReference type="GO" id="GO:0005886">
    <property type="term" value="C:plasma membrane"/>
    <property type="evidence" value="ECO:0007669"/>
    <property type="project" value="UniProtKB-SubCell"/>
</dbReference>
<dbReference type="GO" id="GO:0008137">
    <property type="term" value="F:NADH dehydrogenase (ubiquinone) activity"/>
    <property type="evidence" value="ECO:0007669"/>
    <property type="project" value="InterPro"/>
</dbReference>
<dbReference type="GO" id="GO:0050136">
    <property type="term" value="F:NADH:ubiquinone reductase (non-electrogenic) activity"/>
    <property type="evidence" value="ECO:0007669"/>
    <property type="project" value="UniProtKB-UniRule"/>
</dbReference>
<dbReference type="GO" id="GO:0048038">
    <property type="term" value="F:quinone binding"/>
    <property type="evidence" value="ECO:0007669"/>
    <property type="project" value="UniProtKB-KW"/>
</dbReference>
<dbReference type="Gene3D" id="3.30.460.80">
    <property type="entry name" value="NADH:ubiquinone oxidoreductase, 30kDa subunit"/>
    <property type="match status" value="1"/>
</dbReference>
<dbReference type="HAMAP" id="MF_01357">
    <property type="entry name" value="NDH1_NuoC"/>
    <property type="match status" value="1"/>
</dbReference>
<dbReference type="InterPro" id="IPR010218">
    <property type="entry name" value="NADH_DH_suC"/>
</dbReference>
<dbReference type="InterPro" id="IPR037232">
    <property type="entry name" value="NADH_quin_OxRdtase_su_C/D-like"/>
</dbReference>
<dbReference type="InterPro" id="IPR001268">
    <property type="entry name" value="NADH_UbQ_OxRdtase_30kDa_su"/>
</dbReference>
<dbReference type="InterPro" id="IPR020396">
    <property type="entry name" value="NADH_UbQ_OxRdtase_CS"/>
</dbReference>
<dbReference type="NCBIfam" id="NF004730">
    <property type="entry name" value="PRK06074.1-1"/>
    <property type="match status" value="1"/>
</dbReference>
<dbReference type="NCBIfam" id="NF004732">
    <property type="entry name" value="PRK06074.1-4"/>
    <property type="match status" value="1"/>
</dbReference>
<dbReference type="PANTHER" id="PTHR10884:SF14">
    <property type="entry name" value="NADH DEHYDROGENASE [UBIQUINONE] IRON-SULFUR PROTEIN 3, MITOCHONDRIAL"/>
    <property type="match status" value="1"/>
</dbReference>
<dbReference type="PANTHER" id="PTHR10884">
    <property type="entry name" value="NADH DEHYDROGENASE UBIQUINONE IRON-SULFUR PROTEIN 3"/>
    <property type="match status" value="1"/>
</dbReference>
<dbReference type="Pfam" id="PF00329">
    <property type="entry name" value="Complex1_30kDa"/>
    <property type="match status" value="1"/>
</dbReference>
<dbReference type="SUPFAM" id="SSF143243">
    <property type="entry name" value="Nqo5-like"/>
    <property type="match status" value="1"/>
</dbReference>
<dbReference type="PROSITE" id="PS00542">
    <property type="entry name" value="COMPLEX1_30K"/>
    <property type="match status" value="1"/>
</dbReference>
<reference key="1">
    <citation type="journal article" date="2008" name="BMC Genomics">
        <title>Genome sequence and rapid evolution of the rice pathogen Xanthomonas oryzae pv. oryzae PXO99A.</title>
        <authorList>
            <person name="Salzberg S.L."/>
            <person name="Sommer D.D."/>
            <person name="Schatz M.C."/>
            <person name="Phillippy A.M."/>
            <person name="Rabinowicz P.D."/>
            <person name="Tsuge S."/>
            <person name="Furutani A."/>
            <person name="Ochiai H."/>
            <person name="Delcher A.L."/>
            <person name="Kelley D."/>
            <person name="Madupu R."/>
            <person name="Puiu D."/>
            <person name="Radune D."/>
            <person name="Shumway M."/>
            <person name="Trapnell C."/>
            <person name="Aparna G."/>
            <person name="Jha G."/>
            <person name="Pandey A."/>
            <person name="Patil P.B."/>
            <person name="Ishihara H."/>
            <person name="Meyer D.F."/>
            <person name="Szurek B."/>
            <person name="Verdier V."/>
            <person name="Koebnik R."/>
            <person name="Dow J.M."/>
            <person name="Ryan R.P."/>
            <person name="Hirata H."/>
            <person name="Tsuyumu S."/>
            <person name="Won Lee S."/>
            <person name="Seo Y.-S."/>
            <person name="Sriariyanum M."/>
            <person name="Ronald P.C."/>
            <person name="Sonti R.V."/>
            <person name="Van Sluys M.-A."/>
            <person name="Leach J.E."/>
            <person name="White F.F."/>
            <person name="Bogdanove A.J."/>
        </authorList>
    </citation>
    <scope>NUCLEOTIDE SEQUENCE [LARGE SCALE GENOMIC DNA]</scope>
    <source>
        <strain>PXO99A</strain>
    </source>
</reference>
<organism>
    <name type="scientific">Xanthomonas oryzae pv. oryzae (strain PXO99A)</name>
    <dbReference type="NCBI Taxonomy" id="360094"/>
    <lineage>
        <taxon>Bacteria</taxon>
        <taxon>Pseudomonadati</taxon>
        <taxon>Pseudomonadota</taxon>
        <taxon>Gammaproteobacteria</taxon>
        <taxon>Lysobacterales</taxon>
        <taxon>Lysobacteraceae</taxon>
        <taxon>Xanthomonas</taxon>
    </lineage>
</organism>
<evidence type="ECO:0000255" key="1">
    <source>
        <dbReference type="HAMAP-Rule" id="MF_01357"/>
    </source>
</evidence>
<proteinExistence type="inferred from homology"/>